<reference key="1">
    <citation type="journal article" date="2011" name="Proc. Natl. Acad. Sci. U.S.A.">
        <title>Genomic anatomy of Escherichia coli O157:H7 outbreaks.</title>
        <authorList>
            <person name="Eppinger M."/>
            <person name="Mammel M.K."/>
            <person name="Leclerc J.E."/>
            <person name="Ravel J."/>
            <person name="Cebula T.A."/>
        </authorList>
    </citation>
    <scope>NUCLEOTIDE SEQUENCE [LARGE SCALE GENOMIC DNA]</scope>
    <source>
        <strain>EC4115 / EHEC</strain>
    </source>
</reference>
<gene>
    <name evidence="1" type="primary">xseB</name>
    <name type="ordered locus">ECH74115_0505</name>
</gene>
<name>EX7S_ECO5E</name>
<sequence length="80" mass="8952">MPKKNEAPASFEKALSELEQIVTRLESGDLPLEEALNEFERGVQLARQGQAKLQQAEQRVQILLSDNEDASLTPFTPDNE</sequence>
<dbReference type="EC" id="3.1.11.6" evidence="1"/>
<dbReference type="EMBL" id="CP001164">
    <property type="protein sequence ID" value="ACI36987.1"/>
    <property type="molecule type" value="Genomic_DNA"/>
</dbReference>
<dbReference type="RefSeq" id="WP_001124935.1">
    <property type="nucleotide sequence ID" value="NC_011353.1"/>
</dbReference>
<dbReference type="SMR" id="B5Z3S7"/>
<dbReference type="GeneID" id="75202844"/>
<dbReference type="KEGG" id="ecf:ECH74115_0505"/>
<dbReference type="HOGENOM" id="CLU_145918_3_3_6"/>
<dbReference type="GO" id="GO:0005829">
    <property type="term" value="C:cytosol"/>
    <property type="evidence" value="ECO:0007669"/>
    <property type="project" value="TreeGrafter"/>
</dbReference>
<dbReference type="GO" id="GO:0009318">
    <property type="term" value="C:exodeoxyribonuclease VII complex"/>
    <property type="evidence" value="ECO:0007669"/>
    <property type="project" value="InterPro"/>
</dbReference>
<dbReference type="GO" id="GO:0008855">
    <property type="term" value="F:exodeoxyribonuclease VII activity"/>
    <property type="evidence" value="ECO:0007669"/>
    <property type="project" value="UniProtKB-UniRule"/>
</dbReference>
<dbReference type="GO" id="GO:0006308">
    <property type="term" value="P:DNA catabolic process"/>
    <property type="evidence" value="ECO:0007669"/>
    <property type="project" value="UniProtKB-UniRule"/>
</dbReference>
<dbReference type="FunFam" id="1.10.287.1040:FF:000001">
    <property type="entry name" value="Exodeoxyribonuclease 7 small subunit"/>
    <property type="match status" value="1"/>
</dbReference>
<dbReference type="Gene3D" id="1.10.287.1040">
    <property type="entry name" value="Exonuclease VII, small subunit"/>
    <property type="match status" value="1"/>
</dbReference>
<dbReference type="HAMAP" id="MF_00337">
    <property type="entry name" value="Exonuc_7_S"/>
    <property type="match status" value="1"/>
</dbReference>
<dbReference type="InterPro" id="IPR003761">
    <property type="entry name" value="Exonuc_VII_S"/>
</dbReference>
<dbReference type="InterPro" id="IPR037004">
    <property type="entry name" value="Exonuc_VII_ssu_sf"/>
</dbReference>
<dbReference type="NCBIfam" id="NF002137">
    <property type="entry name" value="PRK00977.1-1"/>
    <property type="match status" value="1"/>
</dbReference>
<dbReference type="NCBIfam" id="NF002140">
    <property type="entry name" value="PRK00977.1-4"/>
    <property type="match status" value="1"/>
</dbReference>
<dbReference type="NCBIfam" id="TIGR01280">
    <property type="entry name" value="xseB"/>
    <property type="match status" value="1"/>
</dbReference>
<dbReference type="PANTHER" id="PTHR34137">
    <property type="entry name" value="EXODEOXYRIBONUCLEASE 7 SMALL SUBUNIT"/>
    <property type="match status" value="1"/>
</dbReference>
<dbReference type="PANTHER" id="PTHR34137:SF1">
    <property type="entry name" value="EXODEOXYRIBONUCLEASE 7 SMALL SUBUNIT"/>
    <property type="match status" value="1"/>
</dbReference>
<dbReference type="Pfam" id="PF02609">
    <property type="entry name" value="Exonuc_VII_S"/>
    <property type="match status" value="1"/>
</dbReference>
<dbReference type="PIRSF" id="PIRSF006488">
    <property type="entry name" value="Exonuc_VII_S"/>
    <property type="match status" value="1"/>
</dbReference>
<dbReference type="SUPFAM" id="SSF116842">
    <property type="entry name" value="XseB-like"/>
    <property type="match status" value="1"/>
</dbReference>
<organism>
    <name type="scientific">Escherichia coli O157:H7 (strain EC4115 / EHEC)</name>
    <dbReference type="NCBI Taxonomy" id="444450"/>
    <lineage>
        <taxon>Bacteria</taxon>
        <taxon>Pseudomonadati</taxon>
        <taxon>Pseudomonadota</taxon>
        <taxon>Gammaproteobacteria</taxon>
        <taxon>Enterobacterales</taxon>
        <taxon>Enterobacteriaceae</taxon>
        <taxon>Escherichia</taxon>
    </lineage>
</organism>
<accession>B5Z3S7</accession>
<feature type="chain" id="PRO_1000119920" description="Exodeoxyribonuclease 7 small subunit">
    <location>
        <begin position="1"/>
        <end position="80"/>
    </location>
</feature>
<comment type="function">
    <text evidence="1">Bidirectionally degrades single-stranded DNA into large acid-insoluble oligonucleotides, which are then degraded further into small acid-soluble oligonucleotides.</text>
</comment>
<comment type="catalytic activity">
    <reaction evidence="1">
        <text>Exonucleolytic cleavage in either 5'- to 3'- or 3'- to 5'-direction to yield nucleoside 5'-phosphates.</text>
        <dbReference type="EC" id="3.1.11.6"/>
    </reaction>
</comment>
<comment type="subunit">
    <text evidence="1">Heterooligomer composed of large and small subunits.</text>
</comment>
<comment type="subcellular location">
    <subcellularLocation>
        <location evidence="1">Cytoplasm</location>
    </subcellularLocation>
</comment>
<comment type="similarity">
    <text evidence="1">Belongs to the XseB family.</text>
</comment>
<proteinExistence type="inferred from homology"/>
<keyword id="KW-0963">Cytoplasm</keyword>
<keyword id="KW-0269">Exonuclease</keyword>
<keyword id="KW-0378">Hydrolase</keyword>
<keyword id="KW-0540">Nuclease</keyword>
<protein>
    <recommendedName>
        <fullName evidence="1">Exodeoxyribonuclease 7 small subunit</fullName>
        <ecNumber evidence="1">3.1.11.6</ecNumber>
    </recommendedName>
    <alternativeName>
        <fullName evidence="1">Exodeoxyribonuclease VII small subunit</fullName>
        <shortName evidence="1">Exonuclease VII small subunit</shortName>
    </alternativeName>
</protein>
<evidence type="ECO:0000255" key="1">
    <source>
        <dbReference type="HAMAP-Rule" id="MF_00337"/>
    </source>
</evidence>